<keyword id="KW-0997">Cell inner membrane</keyword>
<keyword id="KW-1003">Cell membrane</keyword>
<keyword id="KW-0342">GTP-binding</keyword>
<keyword id="KW-0378">Hydrolase</keyword>
<keyword id="KW-0472">Membrane</keyword>
<keyword id="KW-0547">Nucleotide-binding</keyword>
<keyword id="KW-0648">Protein biosynthesis</keyword>
<keyword id="KW-1185">Reference proteome</keyword>
<protein>
    <recommendedName>
        <fullName evidence="1">Elongation factor 4</fullName>
        <shortName evidence="1">EF-4</shortName>
        <ecNumber evidence="1">3.6.5.n1</ecNumber>
    </recommendedName>
    <alternativeName>
        <fullName evidence="1">Ribosomal back-translocase LepA</fullName>
    </alternativeName>
</protein>
<reference key="1">
    <citation type="journal article" date="2011" name="Stand. Genomic Sci.">
        <title>Complete genome sequence of Rhodospirillum rubrum type strain (S1).</title>
        <authorList>
            <person name="Munk A.C."/>
            <person name="Copeland A."/>
            <person name="Lucas S."/>
            <person name="Lapidus A."/>
            <person name="Del Rio T.G."/>
            <person name="Barry K."/>
            <person name="Detter J.C."/>
            <person name="Hammon N."/>
            <person name="Israni S."/>
            <person name="Pitluck S."/>
            <person name="Brettin T."/>
            <person name="Bruce D."/>
            <person name="Han C."/>
            <person name="Tapia R."/>
            <person name="Gilna P."/>
            <person name="Schmutz J."/>
            <person name="Larimer F."/>
            <person name="Land M."/>
            <person name="Kyrpides N.C."/>
            <person name="Mavromatis K."/>
            <person name="Richardson P."/>
            <person name="Rohde M."/>
            <person name="Goeker M."/>
            <person name="Klenk H.P."/>
            <person name="Zhang Y."/>
            <person name="Roberts G.P."/>
            <person name="Reslewic S."/>
            <person name="Schwartz D.C."/>
        </authorList>
    </citation>
    <scope>NUCLEOTIDE SEQUENCE [LARGE SCALE GENOMIC DNA]</scope>
    <source>
        <strain>ATCC 11170 / ATH 1.1.1 / DSM 467 / LMG 4362 / NCIMB 8255 / S1</strain>
    </source>
</reference>
<sequence>MSDLSHIRNFAIIAHIDHGKSTLADRLIQTCGGVEARDMKEQLLDSMDLERERGITIKAQTVRLHYTAKSDGRTYQLNLMDTPGHVDFAYEVSRSLAACEGSLLVVDASQGVEAQTLANVYQAIDAGHEIIPVLNKIDLPAAEPERIKQQIEDVIGLDTSDAVGISAKTGLNIDQVLEALVLRLPPPTGDVDAPTQALLVDSWYDSYLGVVILVRVRHGVLRKGMKMLMMATGAVHPIDKVGVFTPKMLETDSLSAGEMGFVMAGIKSVADCQIGDTITDDRAPAAEALPGFKASIPVVWCGLFPVDSSDFEVLRESLAKLRLNDSSFEFQAESSAALGFGFRCGFLGLLHMEIIQERLEREFGLDLITTAPSVVYRMHMTDGTLLELHNPADMPDPVRLDFVEEPWVKATIMVPDEYLGQILALCTERRGIQMDLTYAGSRAMAVYKLPLNEIVFDFYDRLKSISRGYASFDYEVADYAESDLVKVSILVNNEPVDALAFIAHRTQADFRGRQICGRLKDLIPRHLFKVPIQAAIGGRVIARETIAAMRKDVTAKCYGGDITRKKKLLEKQKEGKKKMRQFGKVEIPQSAFINALRMSDD</sequence>
<organism>
    <name type="scientific">Rhodospirillum rubrum (strain ATCC 11170 / ATH 1.1.1 / DSM 467 / LMG 4362 / NCIMB 8255 / S1)</name>
    <dbReference type="NCBI Taxonomy" id="269796"/>
    <lineage>
        <taxon>Bacteria</taxon>
        <taxon>Pseudomonadati</taxon>
        <taxon>Pseudomonadota</taxon>
        <taxon>Alphaproteobacteria</taxon>
        <taxon>Rhodospirillales</taxon>
        <taxon>Rhodospirillaceae</taxon>
        <taxon>Rhodospirillum</taxon>
    </lineage>
</organism>
<name>LEPA_RHORT</name>
<comment type="function">
    <text evidence="1">Required for accurate and efficient protein synthesis under certain stress conditions. May act as a fidelity factor of the translation reaction, by catalyzing a one-codon backward translocation of tRNAs on improperly translocated ribosomes. Back-translocation proceeds from a post-translocation (POST) complex to a pre-translocation (PRE) complex, thus giving elongation factor G a second chance to translocate the tRNAs correctly. Binds to ribosomes in a GTP-dependent manner.</text>
</comment>
<comment type="catalytic activity">
    <reaction evidence="1">
        <text>GTP + H2O = GDP + phosphate + H(+)</text>
        <dbReference type="Rhea" id="RHEA:19669"/>
        <dbReference type="ChEBI" id="CHEBI:15377"/>
        <dbReference type="ChEBI" id="CHEBI:15378"/>
        <dbReference type="ChEBI" id="CHEBI:37565"/>
        <dbReference type="ChEBI" id="CHEBI:43474"/>
        <dbReference type="ChEBI" id="CHEBI:58189"/>
        <dbReference type="EC" id="3.6.5.n1"/>
    </reaction>
</comment>
<comment type="subcellular location">
    <subcellularLocation>
        <location evidence="1">Cell inner membrane</location>
        <topology evidence="1">Peripheral membrane protein</topology>
        <orientation evidence="1">Cytoplasmic side</orientation>
    </subcellularLocation>
</comment>
<comment type="similarity">
    <text evidence="1">Belongs to the TRAFAC class translation factor GTPase superfamily. Classic translation factor GTPase family. LepA subfamily.</text>
</comment>
<comment type="sequence caution" evidence="2">
    <conflict type="erroneous initiation">
        <sequence resource="EMBL-CDS" id="ABC24159"/>
    </conflict>
</comment>
<accession>Q2RNY6</accession>
<dbReference type="EC" id="3.6.5.n1" evidence="1"/>
<dbReference type="EMBL" id="CP000230">
    <property type="protein sequence ID" value="ABC24159.1"/>
    <property type="status" value="ALT_INIT"/>
    <property type="molecule type" value="Genomic_DNA"/>
</dbReference>
<dbReference type="RefSeq" id="WP_014626581.1">
    <property type="nucleotide sequence ID" value="NC_007643.1"/>
</dbReference>
<dbReference type="RefSeq" id="YP_428446.1">
    <property type="nucleotide sequence ID" value="NC_007643.1"/>
</dbReference>
<dbReference type="SMR" id="Q2RNY6"/>
<dbReference type="STRING" id="269796.Rru_A3365"/>
<dbReference type="EnsemblBacteria" id="ABC24159">
    <property type="protein sequence ID" value="ABC24159"/>
    <property type="gene ID" value="Rru_A3365"/>
</dbReference>
<dbReference type="KEGG" id="rru:Rru_A3365"/>
<dbReference type="PATRIC" id="fig|269796.9.peg.3479"/>
<dbReference type="eggNOG" id="COG0481">
    <property type="taxonomic scope" value="Bacteria"/>
</dbReference>
<dbReference type="HOGENOM" id="CLU_009995_3_3_5"/>
<dbReference type="PhylomeDB" id="Q2RNY6"/>
<dbReference type="Proteomes" id="UP000001929">
    <property type="component" value="Chromosome"/>
</dbReference>
<dbReference type="GO" id="GO:0005886">
    <property type="term" value="C:plasma membrane"/>
    <property type="evidence" value="ECO:0007669"/>
    <property type="project" value="UniProtKB-SubCell"/>
</dbReference>
<dbReference type="GO" id="GO:0005525">
    <property type="term" value="F:GTP binding"/>
    <property type="evidence" value="ECO:0007669"/>
    <property type="project" value="UniProtKB-UniRule"/>
</dbReference>
<dbReference type="GO" id="GO:0003924">
    <property type="term" value="F:GTPase activity"/>
    <property type="evidence" value="ECO:0007669"/>
    <property type="project" value="UniProtKB-UniRule"/>
</dbReference>
<dbReference type="GO" id="GO:0043022">
    <property type="term" value="F:ribosome binding"/>
    <property type="evidence" value="ECO:0007669"/>
    <property type="project" value="UniProtKB-UniRule"/>
</dbReference>
<dbReference type="GO" id="GO:0003746">
    <property type="term" value="F:translation elongation factor activity"/>
    <property type="evidence" value="ECO:0007669"/>
    <property type="project" value="UniProtKB-UniRule"/>
</dbReference>
<dbReference type="GO" id="GO:0045727">
    <property type="term" value="P:positive regulation of translation"/>
    <property type="evidence" value="ECO:0007669"/>
    <property type="project" value="UniProtKB-UniRule"/>
</dbReference>
<dbReference type="CDD" id="cd03699">
    <property type="entry name" value="EF4_II"/>
    <property type="match status" value="1"/>
</dbReference>
<dbReference type="CDD" id="cd16260">
    <property type="entry name" value="EF4_III"/>
    <property type="match status" value="1"/>
</dbReference>
<dbReference type="CDD" id="cd01890">
    <property type="entry name" value="LepA"/>
    <property type="match status" value="1"/>
</dbReference>
<dbReference type="CDD" id="cd03709">
    <property type="entry name" value="lepA_C"/>
    <property type="match status" value="1"/>
</dbReference>
<dbReference type="FunFam" id="3.40.50.300:FF:000078">
    <property type="entry name" value="Elongation factor 4"/>
    <property type="match status" value="1"/>
</dbReference>
<dbReference type="FunFam" id="2.40.30.10:FF:000015">
    <property type="entry name" value="Translation factor GUF1, mitochondrial"/>
    <property type="match status" value="1"/>
</dbReference>
<dbReference type="FunFam" id="3.30.70.240:FF:000007">
    <property type="entry name" value="Translation factor GUF1, mitochondrial"/>
    <property type="match status" value="1"/>
</dbReference>
<dbReference type="FunFam" id="3.30.70.2570:FF:000001">
    <property type="entry name" value="Translation factor GUF1, mitochondrial"/>
    <property type="match status" value="1"/>
</dbReference>
<dbReference type="FunFam" id="3.30.70.870:FF:000004">
    <property type="entry name" value="Translation factor GUF1, mitochondrial"/>
    <property type="match status" value="1"/>
</dbReference>
<dbReference type="Gene3D" id="3.30.70.240">
    <property type="match status" value="1"/>
</dbReference>
<dbReference type="Gene3D" id="3.30.70.2570">
    <property type="entry name" value="Elongation factor 4, C-terminal domain"/>
    <property type="match status" value="1"/>
</dbReference>
<dbReference type="Gene3D" id="3.30.70.870">
    <property type="entry name" value="Elongation Factor G (Translational Gtpase), domain 3"/>
    <property type="match status" value="1"/>
</dbReference>
<dbReference type="Gene3D" id="3.40.50.300">
    <property type="entry name" value="P-loop containing nucleotide triphosphate hydrolases"/>
    <property type="match status" value="1"/>
</dbReference>
<dbReference type="Gene3D" id="2.40.30.10">
    <property type="entry name" value="Translation factors"/>
    <property type="match status" value="1"/>
</dbReference>
<dbReference type="HAMAP" id="MF_00071">
    <property type="entry name" value="LepA"/>
    <property type="match status" value="1"/>
</dbReference>
<dbReference type="InterPro" id="IPR006297">
    <property type="entry name" value="EF-4"/>
</dbReference>
<dbReference type="InterPro" id="IPR035647">
    <property type="entry name" value="EFG_III/V"/>
</dbReference>
<dbReference type="InterPro" id="IPR000640">
    <property type="entry name" value="EFG_V-like"/>
</dbReference>
<dbReference type="InterPro" id="IPR031157">
    <property type="entry name" value="G_TR_CS"/>
</dbReference>
<dbReference type="InterPro" id="IPR038363">
    <property type="entry name" value="LepA_C_sf"/>
</dbReference>
<dbReference type="InterPro" id="IPR013842">
    <property type="entry name" value="LepA_CTD"/>
</dbReference>
<dbReference type="InterPro" id="IPR035654">
    <property type="entry name" value="LepA_IV"/>
</dbReference>
<dbReference type="InterPro" id="IPR027417">
    <property type="entry name" value="P-loop_NTPase"/>
</dbReference>
<dbReference type="InterPro" id="IPR005225">
    <property type="entry name" value="Small_GTP-bd"/>
</dbReference>
<dbReference type="InterPro" id="IPR000795">
    <property type="entry name" value="T_Tr_GTP-bd_dom"/>
</dbReference>
<dbReference type="InterPro" id="IPR009000">
    <property type="entry name" value="Transl_B-barrel_sf"/>
</dbReference>
<dbReference type="NCBIfam" id="TIGR01393">
    <property type="entry name" value="lepA"/>
    <property type="match status" value="1"/>
</dbReference>
<dbReference type="NCBIfam" id="TIGR00231">
    <property type="entry name" value="small_GTP"/>
    <property type="match status" value="1"/>
</dbReference>
<dbReference type="PANTHER" id="PTHR43512:SF4">
    <property type="entry name" value="TRANSLATION FACTOR GUF1 HOMOLOG, CHLOROPLASTIC"/>
    <property type="match status" value="1"/>
</dbReference>
<dbReference type="PANTHER" id="PTHR43512">
    <property type="entry name" value="TRANSLATION FACTOR GUF1-RELATED"/>
    <property type="match status" value="1"/>
</dbReference>
<dbReference type="Pfam" id="PF00679">
    <property type="entry name" value="EFG_C"/>
    <property type="match status" value="1"/>
</dbReference>
<dbReference type="Pfam" id="PF00009">
    <property type="entry name" value="GTP_EFTU"/>
    <property type="match status" value="1"/>
</dbReference>
<dbReference type="Pfam" id="PF06421">
    <property type="entry name" value="LepA_C"/>
    <property type="match status" value="1"/>
</dbReference>
<dbReference type="PRINTS" id="PR00315">
    <property type="entry name" value="ELONGATNFCT"/>
</dbReference>
<dbReference type="SMART" id="SM00838">
    <property type="entry name" value="EFG_C"/>
    <property type="match status" value="1"/>
</dbReference>
<dbReference type="SUPFAM" id="SSF54980">
    <property type="entry name" value="EF-G C-terminal domain-like"/>
    <property type="match status" value="2"/>
</dbReference>
<dbReference type="SUPFAM" id="SSF52540">
    <property type="entry name" value="P-loop containing nucleoside triphosphate hydrolases"/>
    <property type="match status" value="1"/>
</dbReference>
<dbReference type="SUPFAM" id="SSF50447">
    <property type="entry name" value="Translation proteins"/>
    <property type="match status" value="1"/>
</dbReference>
<dbReference type="PROSITE" id="PS00301">
    <property type="entry name" value="G_TR_1"/>
    <property type="match status" value="1"/>
</dbReference>
<dbReference type="PROSITE" id="PS51722">
    <property type="entry name" value="G_TR_2"/>
    <property type="match status" value="1"/>
</dbReference>
<proteinExistence type="inferred from homology"/>
<gene>
    <name evidence="1" type="primary">lepA</name>
    <name type="ordered locus">Rru_A3365</name>
</gene>
<feature type="chain" id="PRO_0000265696" description="Elongation factor 4">
    <location>
        <begin position="1"/>
        <end position="601"/>
    </location>
</feature>
<feature type="domain" description="tr-type G">
    <location>
        <begin position="5"/>
        <end position="188"/>
    </location>
</feature>
<feature type="binding site" evidence="1">
    <location>
        <begin position="17"/>
        <end position="22"/>
    </location>
    <ligand>
        <name>GTP</name>
        <dbReference type="ChEBI" id="CHEBI:37565"/>
    </ligand>
</feature>
<feature type="binding site" evidence="1">
    <location>
        <begin position="135"/>
        <end position="138"/>
    </location>
    <ligand>
        <name>GTP</name>
        <dbReference type="ChEBI" id="CHEBI:37565"/>
    </ligand>
</feature>
<evidence type="ECO:0000255" key="1">
    <source>
        <dbReference type="HAMAP-Rule" id="MF_00071"/>
    </source>
</evidence>
<evidence type="ECO:0000305" key="2"/>